<comment type="function">
    <text evidence="1">Phosphorylation of dTMP to form dTDP in both de novo and salvage pathways of dTTP synthesis.</text>
</comment>
<comment type="catalytic activity">
    <reaction evidence="1">
        <text>dTMP + ATP = dTDP + ADP</text>
        <dbReference type="Rhea" id="RHEA:13517"/>
        <dbReference type="ChEBI" id="CHEBI:30616"/>
        <dbReference type="ChEBI" id="CHEBI:58369"/>
        <dbReference type="ChEBI" id="CHEBI:63528"/>
        <dbReference type="ChEBI" id="CHEBI:456216"/>
        <dbReference type="EC" id="2.7.4.9"/>
    </reaction>
</comment>
<comment type="similarity">
    <text evidence="1">Belongs to the thymidylate kinase family.</text>
</comment>
<sequence length="210" mass="23558">MMKANFIVVEGLEGAGKSTAIKTVLDTLKQAGIENIVNTREPGGTPLAEKMRALVKEEHEGEELKDMTELLLLYAARVQLVENVIKPALANGQWVVGDRHDLSSQAYQGGGRQIDASLMKNLRDTTLGDFKPAFTLYMDIDPRIGLERARGRGELDRIEKMDISFFERTRERYLEIANADPSIVVINAEQSIEEVSRDIQDALNEWLSRQ</sequence>
<organism>
    <name type="scientific">Vibrio parahaemolyticus serotype O3:K6 (strain RIMD 2210633)</name>
    <dbReference type="NCBI Taxonomy" id="223926"/>
    <lineage>
        <taxon>Bacteria</taxon>
        <taxon>Pseudomonadati</taxon>
        <taxon>Pseudomonadota</taxon>
        <taxon>Gammaproteobacteria</taxon>
        <taxon>Vibrionales</taxon>
        <taxon>Vibrionaceae</taxon>
        <taxon>Vibrio</taxon>
    </lineage>
</organism>
<dbReference type="EC" id="2.7.4.9" evidence="1"/>
<dbReference type="EMBL" id="BA000031">
    <property type="protein sequence ID" value="BAC60312.1"/>
    <property type="molecule type" value="Genomic_DNA"/>
</dbReference>
<dbReference type="RefSeq" id="NP_798428.1">
    <property type="nucleotide sequence ID" value="NC_004603.1"/>
</dbReference>
<dbReference type="RefSeq" id="WP_005490472.1">
    <property type="nucleotide sequence ID" value="NC_004603.1"/>
</dbReference>
<dbReference type="SMR" id="Q87N26"/>
<dbReference type="GeneID" id="1189560"/>
<dbReference type="KEGG" id="vpa:VP2049"/>
<dbReference type="PATRIC" id="fig|223926.6.peg.1959"/>
<dbReference type="eggNOG" id="COG0125">
    <property type="taxonomic scope" value="Bacteria"/>
</dbReference>
<dbReference type="HOGENOM" id="CLU_049131_0_1_6"/>
<dbReference type="Proteomes" id="UP000002493">
    <property type="component" value="Chromosome 1"/>
</dbReference>
<dbReference type="GO" id="GO:0005829">
    <property type="term" value="C:cytosol"/>
    <property type="evidence" value="ECO:0007669"/>
    <property type="project" value="TreeGrafter"/>
</dbReference>
<dbReference type="GO" id="GO:0005524">
    <property type="term" value="F:ATP binding"/>
    <property type="evidence" value="ECO:0007669"/>
    <property type="project" value="UniProtKB-UniRule"/>
</dbReference>
<dbReference type="GO" id="GO:0004798">
    <property type="term" value="F:dTMP kinase activity"/>
    <property type="evidence" value="ECO:0007669"/>
    <property type="project" value="UniProtKB-UniRule"/>
</dbReference>
<dbReference type="GO" id="GO:0006233">
    <property type="term" value="P:dTDP biosynthetic process"/>
    <property type="evidence" value="ECO:0007669"/>
    <property type="project" value="InterPro"/>
</dbReference>
<dbReference type="GO" id="GO:0006235">
    <property type="term" value="P:dTTP biosynthetic process"/>
    <property type="evidence" value="ECO:0007669"/>
    <property type="project" value="UniProtKB-UniRule"/>
</dbReference>
<dbReference type="GO" id="GO:0006227">
    <property type="term" value="P:dUDP biosynthetic process"/>
    <property type="evidence" value="ECO:0007669"/>
    <property type="project" value="TreeGrafter"/>
</dbReference>
<dbReference type="CDD" id="cd01672">
    <property type="entry name" value="TMPK"/>
    <property type="match status" value="1"/>
</dbReference>
<dbReference type="FunFam" id="3.40.50.300:FF:000321">
    <property type="entry name" value="Thymidylate kinase"/>
    <property type="match status" value="1"/>
</dbReference>
<dbReference type="Gene3D" id="3.40.50.300">
    <property type="entry name" value="P-loop containing nucleotide triphosphate hydrolases"/>
    <property type="match status" value="1"/>
</dbReference>
<dbReference type="HAMAP" id="MF_00165">
    <property type="entry name" value="Thymidylate_kinase"/>
    <property type="match status" value="1"/>
</dbReference>
<dbReference type="InterPro" id="IPR027417">
    <property type="entry name" value="P-loop_NTPase"/>
</dbReference>
<dbReference type="InterPro" id="IPR039430">
    <property type="entry name" value="Thymidylate_kin-like_dom"/>
</dbReference>
<dbReference type="InterPro" id="IPR018095">
    <property type="entry name" value="Thymidylate_kin_CS"/>
</dbReference>
<dbReference type="InterPro" id="IPR018094">
    <property type="entry name" value="Thymidylate_kinase"/>
</dbReference>
<dbReference type="NCBIfam" id="TIGR00041">
    <property type="entry name" value="DTMP_kinase"/>
    <property type="match status" value="1"/>
</dbReference>
<dbReference type="PANTHER" id="PTHR10344">
    <property type="entry name" value="THYMIDYLATE KINASE"/>
    <property type="match status" value="1"/>
</dbReference>
<dbReference type="PANTHER" id="PTHR10344:SF4">
    <property type="entry name" value="UMP-CMP KINASE 2, MITOCHONDRIAL"/>
    <property type="match status" value="1"/>
</dbReference>
<dbReference type="Pfam" id="PF02223">
    <property type="entry name" value="Thymidylate_kin"/>
    <property type="match status" value="1"/>
</dbReference>
<dbReference type="SUPFAM" id="SSF52540">
    <property type="entry name" value="P-loop containing nucleoside triphosphate hydrolases"/>
    <property type="match status" value="1"/>
</dbReference>
<dbReference type="PROSITE" id="PS01331">
    <property type="entry name" value="THYMIDYLATE_KINASE"/>
    <property type="match status" value="1"/>
</dbReference>
<protein>
    <recommendedName>
        <fullName evidence="1">Thymidylate kinase</fullName>
        <ecNumber evidence="1">2.7.4.9</ecNumber>
    </recommendedName>
    <alternativeName>
        <fullName evidence="1">dTMP kinase</fullName>
    </alternativeName>
</protein>
<keyword id="KW-0067">ATP-binding</keyword>
<keyword id="KW-0418">Kinase</keyword>
<keyword id="KW-0545">Nucleotide biosynthesis</keyword>
<keyword id="KW-0547">Nucleotide-binding</keyword>
<keyword id="KW-0808">Transferase</keyword>
<gene>
    <name evidence="1" type="primary">tmk</name>
    <name type="ordered locus">VP2049</name>
</gene>
<name>KTHY_VIBPA</name>
<accession>Q87N26</accession>
<evidence type="ECO:0000255" key="1">
    <source>
        <dbReference type="HAMAP-Rule" id="MF_00165"/>
    </source>
</evidence>
<feature type="chain" id="PRO_0000155369" description="Thymidylate kinase">
    <location>
        <begin position="1"/>
        <end position="210"/>
    </location>
</feature>
<feature type="binding site" evidence="1">
    <location>
        <begin position="11"/>
        <end position="18"/>
    </location>
    <ligand>
        <name>ATP</name>
        <dbReference type="ChEBI" id="CHEBI:30616"/>
    </ligand>
</feature>
<reference key="1">
    <citation type="journal article" date="2003" name="Lancet">
        <title>Genome sequence of Vibrio parahaemolyticus: a pathogenic mechanism distinct from that of V. cholerae.</title>
        <authorList>
            <person name="Makino K."/>
            <person name="Oshima K."/>
            <person name="Kurokawa K."/>
            <person name="Yokoyama K."/>
            <person name="Uda T."/>
            <person name="Tagomori K."/>
            <person name="Iijima Y."/>
            <person name="Najima M."/>
            <person name="Nakano M."/>
            <person name="Yamashita A."/>
            <person name="Kubota Y."/>
            <person name="Kimura S."/>
            <person name="Yasunaga T."/>
            <person name="Honda T."/>
            <person name="Shinagawa H."/>
            <person name="Hattori M."/>
            <person name="Iida T."/>
        </authorList>
    </citation>
    <scope>NUCLEOTIDE SEQUENCE [LARGE SCALE GENOMIC DNA]</scope>
    <source>
        <strain>RIMD 2210633</strain>
    </source>
</reference>
<proteinExistence type="inferred from homology"/>